<evidence type="ECO:0000255" key="1">
    <source>
        <dbReference type="HAMAP-Rule" id="MF_01698"/>
    </source>
</evidence>
<evidence type="ECO:0000256" key="2">
    <source>
        <dbReference type="SAM" id="MobiDB-lite"/>
    </source>
</evidence>
<sequence>MDTPLVTDDLDRTLAEQVLTLAEAARAADGVAPLSEHTLLRVRHGAPSGSSRFHLALEDGRAVGFAFVERVAGEPDSGEVVVHPDHRGRGHGTALLHSVDRDAGPDGVRVWAHGRTPQAVSVAREDGWTAVRELHKMRMPLRDIAGDEPGGPWEAPELPEPELRPEVAERVRLRPFVVGQDEQAWLAANARAFADHPEQGQLTLDDLLQREVEDWFDPDGFFLATAKDGGVAAFHWTKTHADGAGLTDGEPVGEVYVVGVDPEWQGSGLGRALTLAGLRHLRDAGLPWVHLYVDGDNEAAVRLYESLGFAMWDTDVMYAPPRDDAPRPNV</sequence>
<gene>
    <name evidence="1" type="primary">mshD</name>
    <name type="ordered locus">Ndas_4378</name>
</gene>
<dbReference type="EC" id="2.3.1.189" evidence="1"/>
<dbReference type="EMBL" id="CP002040">
    <property type="protein sequence ID" value="ADH69767.1"/>
    <property type="molecule type" value="Genomic_DNA"/>
</dbReference>
<dbReference type="RefSeq" id="WP_013155374.1">
    <property type="nucleotide sequence ID" value="NC_014210.1"/>
</dbReference>
<dbReference type="SMR" id="D7AWZ7"/>
<dbReference type="STRING" id="446468.Ndas_4378"/>
<dbReference type="GeneID" id="91486916"/>
<dbReference type="KEGG" id="nda:Ndas_4378"/>
<dbReference type="eggNOG" id="COG0454">
    <property type="taxonomic scope" value="Bacteria"/>
</dbReference>
<dbReference type="eggNOG" id="COG0456">
    <property type="taxonomic scope" value="Bacteria"/>
</dbReference>
<dbReference type="HOGENOM" id="CLU_068014_0_0_11"/>
<dbReference type="OrthoDB" id="3208058at2"/>
<dbReference type="Proteomes" id="UP000002219">
    <property type="component" value="Chromosome 1"/>
</dbReference>
<dbReference type="GO" id="GO:0035447">
    <property type="term" value="F:mycothiol synthase activity"/>
    <property type="evidence" value="ECO:0007669"/>
    <property type="project" value="UniProtKB-UniRule"/>
</dbReference>
<dbReference type="GO" id="GO:0008999">
    <property type="term" value="F:protein-N-terminal-alanine acetyltransferase activity"/>
    <property type="evidence" value="ECO:0007669"/>
    <property type="project" value="TreeGrafter"/>
</dbReference>
<dbReference type="GO" id="GO:0010125">
    <property type="term" value="P:mycothiol biosynthetic process"/>
    <property type="evidence" value="ECO:0007669"/>
    <property type="project" value="UniProtKB-UniRule"/>
</dbReference>
<dbReference type="CDD" id="cd04301">
    <property type="entry name" value="NAT_SF"/>
    <property type="match status" value="2"/>
</dbReference>
<dbReference type="Gene3D" id="3.40.630.30">
    <property type="match status" value="1"/>
</dbReference>
<dbReference type="HAMAP" id="MF_01698">
    <property type="entry name" value="MshD"/>
    <property type="match status" value="1"/>
</dbReference>
<dbReference type="InterPro" id="IPR016181">
    <property type="entry name" value="Acyl_CoA_acyltransferase"/>
</dbReference>
<dbReference type="InterPro" id="IPR000182">
    <property type="entry name" value="GNAT_dom"/>
</dbReference>
<dbReference type="InterPro" id="IPR050276">
    <property type="entry name" value="MshD_Acetyltransferase"/>
</dbReference>
<dbReference type="InterPro" id="IPR017813">
    <property type="entry name" value="Mycothiol_AcTrfase"/>
</dbReference>
<dbReference type="NCBIfam" id="TIGR03448">
    <property type="entry name" value="mycothiol_MshD"/>
    <property type="match status" value="1"/>
</dbReference>
<dbReference type="PANTHER" id="PTHR43617">
    <property type="entry name" value="L-AMINO ACID N-ACETYLTRANSFERASE"/>
    <property type="match status" value="1"/>
</dbReference>
<dbReference type="PANTHER" id="PTHR43617:SF31">
    <property type="entry name" value="MYCOTHIOL ACETYLTRANSFERASE"/>
    <property type="match status" value="1"/>
</dbReference>
<dbReference type="Pfam" id="PF00583">
    <property type="entry name" value="Acetyltransf_1"/>
    <property type="match status" value="1"/>
</dbReference>
<dbReference type="Pfam" id="PF13508">
    <property type="entry name" value="Acetyltransf_7"/>
    <property type="match status" value="1"/>
</dbReference>
<dbReference type="PIRSF" id="PIRSF021524">
    <property type="entry name" value="MSH_acetyltransferase"/>
    <property type="match status" value="1"/>
</dbReference>
<dbReference type="SUPFAM" id="SSF55729">
    <property type="entry name" value="Acyl-CoA N-acyltransferases (Nat)"/>
    <property type="match status" value="1"/>
</dbReference>
<dbReference type="PROSITE" id="PS51186">
    <property type="entry name" value="GNAT"/>
    <property type="match status" value="2"/>
</dbReference>
<organism>
    <name type="scientific">Nocardiopsis dassonvillei (strain ATCC 23218 / DSM 43111 / CIP 107115 / JCM 7437 / KCTC 9190 / NBRC 14626 / NCTC 10488 / NRRL B-5397 / IMRU 509)</name>
    <name type="common">Actinomadura dassonvillei</name>
    <dbReference type="NCBI Taxonomy" id="446468"/>
    <lineage>
        <taxon>Bacteria</taxon>
        <taxon>Bacillati</taxon>
        <taxon>Actinomycetota</taxon>
        <taxon>Actinomycetes</taxon>
        <taxon>Streptosporangiales</taxon>
        <taxon>Nocardiopsidaceae</taxon>
        <taxon>Nocardiopsis</taxon>
    </lineage>
</organism>
<keyword id="KW-0012">Acyltransferase</keyword>
<keyword id="KW-1185">Reference proteome</keyword>
<keyword id="KW-0677">Repeat</keyword>
<keyword id="KW-0808">Transferase</keyword>
<protein>
    <recommendedName>
        <fullName evidence="1">Mycothiol acetyltransferase</fullName>
        <shortName evidence="1">MSH acetyltransferase</shortName>
        <ecNumber evidence="1">2.3.1.189</ecNumber>
    </recommendedName>
    <alternativeName>
        <fullName evidence="1">Mycothiol synthase</fullName>
    </alternativeName>
</protein>
<feature type="chain" id="PRO_0000400287" description="Mycothiol acetyltransferase">
    <location>
        <begin position="1"/>
        <end position="330"/>
    </location>
</feature>
<feature type="domain" description="N-acetyltransferase 1" evidence="1">
    <location>
        <begin position="5"/>
        <end position="142"/>
    </location>
</feature>
<feature type="domain" description="N-acetyltransferase 2" evidence="1">
    <location>
        <begin position="171"/>
        <end position="328"/>
    </location>
</feature>
<feature type="region of interest" description="Disordered" evidence="2">
    <location>
        <begin position="142"/>
        <end position="161"/>
    </location>
</feature>
<feature type="binding site" evidence="1">
    <location>
        <position position="36"/>
    </location>
    <ligand>
        <name>1D-myo-inositol 2-(L-cysteinylamino)-2-deoxy-alpha-D-glucopyranoside</name>
        <dbReference type="ChEBI" id="CHEBI:58887"/>
    </ligand>
</feature>
<feature type="binding site" evidence="1">
    <location>
        <begin position="80"/>
        <end position="82"/>
    </location>
    <ligand>
        <name>acetyl-CoA</name>
        <dbReference type="ChEBI" id="CHEBI:57288"/>
        <label>1</label>
    </ligand>
</feature>
<feature type="binding site" evidence="1">
    <location>
        <position position="198"/>
    </location>
    <ligand>
        <name>1D-myo-inositol 2-(L-cysteinylamino)-2-deoxy-alpha-D-glucopyranoside</name>
        <dbReference type="ChEBI" id="CHEBI:58887"/>
    </ligand>
</feature>
<feature type="binding site" evidence="1">
    <location>
        <position position="238"/>
    </location>
    <ligand>
        <name>1D-myo-inositol 2-(L-cysteinylamino)-2-deoxy-alpha-D-glucopyranoside</name>
        <dbReference type="ChEBI" id="CHEBI:58887"/>
    </ligand>
</feature>
<feature type="binding site" evidence="1">
    <location>
        <position position="254"/>
    </location>
    <ligand>
        <name>1D-myo-inositol 2-(L-cysteinylamino)-2-deoxy-alpha-D-glucopyranoside</name>
        <dbReference type="ChEBI" id="CHEBI:58887"/>
    </ligand>
</feature>
<feature type="binding site" evidence="1">
    <location>
        <begin position="258"/>
        <end position="260"/>
    </location>
    <ligand>
        <name>acetyl-CoA</name>
        <dbReference type="ChEBI" id="CHEBI:57288"/>
        <label>2</label>
    </ligand>
</feature>
<feature type="binding site" evidence="1">
    <location>
        <begin position="265"/>
        <end position="271"/>
    </location>
    <ligand>
        <name>acetyl-CoA</name>
        <dbReference type="ChEBI" id="CHEBI:57288"/>
        <label>2</label>
    </ligand>
</feature>
<feature type="binding site" evidence="1">
    <location>
        <position position="292"/>
    </location>
    <ligand>
        <name>1D-myo-inositol 2-(L-cysteinylamino)-2-deoxy-alpha-D-glucopyranoside</name>
        <dbReference type="ChEBI" id="CHEBI:58887"/>
    </ligand>
</feature>
<feature type="binding site" evidence="1">
    <location>
        <begin position="297"/>
        <end position="302"/>
    </location>
    <ligand>
        <name>acetyl-CoA</name>
        <dbReference type="ChEBI" id="CHEBI:57288"/>
        <label>2</label>
    </ligand>
</feature>
<comment type="function">
    <text evidence="1">Catalyzes the transfer of acetyl from acetyl-CoA to desacetylmycothiol (Cys-GlcN-Ins) to form mycothiol.</text>
</comment>
<comment type="catalytic activity">
    <reaction evidence="1">
        <text>1D-myo-inositol 2-(L-cysteinylamino)-2-deoxy-alpha-D-glucopyranoside + acetyl-CoA = mycothiol + CoA + H(+)</text>
        <dbReference type="Rhea" id="RHEA:26172"/>
        <dbReference type="ChEBI" id="CHEBI:15378"/>
        <dbReference type="ChEBI" id="CHEBI:16768"/>
        <dbReference type="ChEBI" id="CHEBI:57287"/>
        <dbReference type="ChEBI" id="CHEBI:57288"/>
        <dbReference type="ChEBI" id="CHEBI:58887"/>
        <dbReference type="EC" id="2.3.1.189"/>
    </reaction>
</comment>
<comment type="subunit">
    <text evidence="1">Monomer.</text>
</comment>
<comment type="similarity">
    <text evidence="1">Belongs to the acetyltransferase family. MshD subfamily.</text>
</comment>
<proteinExistence type="inferred from homology"/>
<name>MSHD_NOCDD</name>
<reference key="1">
    <citation type="journal article" date="2010" name="Stand. Genomic Sci.">
        <title>Complete genome sequence of Nocardiopsis dassonvillei type strain (IMRU 509).</title>
        <authorList>
            <consortium name="US DOE Joint Genome Institute (JGI-PGF)"/>
            <person name="Sun H."/>
            <person name="Lapidus A."/>
            <person name="Nolan M."/>
            <person name="Lucas S."/>
            <person name="Del Rio T.G."/>
            <person name="Tice H."/>
            <person name="Cheng J.F."/>
            <person name="Tapia R."/>
            <person name="Han C."/>
            <person name="Goodwin L."/>
            <person name="Pitluck S."/>
            <person name="Pagani I."/>
            <person name="Ivanova N."/>
            <person name="Mavromatis K."/>
            <person name="Mikhailova N."/>
            <person name="Pati A."/>
            <person name="Chen A."/>
            <person name="Palaniappan K."/>
            <person name="Land M."/>
            <person name="Hauser L."/>
            <person name="Chang Y.J."/>
            <person name="Jeffries C.D."/>
            <person name="Djao O.D."/>
            <person name="Rohde M."/>
            <person name="Sikorski J."/>
            <person name="Goker M."/>
            <person name="Woyke T."/>
            <person name="Bristow J."/>
            <person name="Eisen J.A."/>
            <person name="Markowitz V."/>
            <person name="Hugenholtz P."/>
            <person name="Kyrpides N.C."/>
            <person name="Klenk H.P."/>
        </authorList>
    </citation>
    <scope>NUCLEOTIDE SEQUENCE [LARGE SCALE GENOMIC DNA]</scope>
    <source>
        <strain>ATCC 23218 / DSM 43111 / CIP 107115 / JCM 7437 / KCTC 9190 / NBRC 14626 / NCTC 10488 / NRRL B-5397 / IMRU 509</strain>
    </source>
</reference>
<accession>D7AWZ7</accession>